<evidence type="ECO:0000250" key="1">
    <source>
        <dbReference type="UniProtKB" id="P09040"/>
    </source>
</evidence>
<evidence type="ECO:0000255" key="2"/>
<evidence type="ECO:0000269" key="3">
    <source>
    </source>
</evidence>
<evidence type="ECO:0000303" key="4">
    <source>
    </source>
</evidence>
<evidence type="ECO:0000305" key="5"/>
<evidence type="ECO:0000312" key="6">
    <source>
        <dbReference type="EMBL" id="ACC99374.1"/>
    </source>
</evidence>
<gene>
    <name evidence="6" type="primary">Dsk</name>
</gene>
<reference evidence="6" key="1">
    <citation type="submission" date="2008-04" db="EMBL/GenBank/DDBJ databases">
        <title>A molecular phylogeny for the Drosophila melanogaster subgroup.</title>
        <authorList>
            <person name="Ke F."/>
        </authorList>
    </citation>
    <scope>NUCLEOTIDE SEQUENCE [GENOMIC DNA]</scope>
</reference>
<reference evidence="5" key="2">
    <citation type="journal article" date="2007" name="J. Insect Physiol.">
        <title>The drosulfakinin 0 (DSK 0) peptide encoded in the conserved Dsk gene affects adult Drosophila melanogaster crop contractions.</title>
        <authorList>
            <person name="Palmer G.C."/>
            <person name="Tran T."/>
            <person name="Duttlinger A."/>
            <person name="Nichols R."/>
        </authorList>
    </citation>
    <scope>IDENTIFICATION</scope>
    <scope>AMIDATION AT PHE-82 AND PHE-119</scope>
    <scope>SULFATION AT TYR-114</scope>
</reference>
<feature type="signal peptide" evidence="2">
    <location>
        <begin position="1"/>
        <end position="33"/>
    </location>
</feature>
<feature type="propeptide" id="PRO_0000351185" evidence="3">
    <location>
        <begin position="34"/>
        <end position="73"/>
    </location>
</feature>
<feature type="peptide" id="PRO_0000351186" description="Drosulfakinin-0" evidence="2 4">
    <location>
        <begin position="76"/>
        <end position="82"/>
    </location>
</feature>
<feature type="propeptide" id="PRO_0000351187" evidence="3">
    <location>
        <begin position="86"/>
        <end position="108"/>
    </location>
</feature>
<feature type="peptide" id="PRO_0000351188" description="Drosulfakinin-1" evidence="2 4">
    <location>
        <begin position="111"/>
        <end position="119"/>
    </location>
</feature>
<feature type="peptide" id="PRO_0000351189" description="Drosulfakinin-2" evidence="1">
    <location>
        <begin position="123"/>
        <end position="136"/>
    </location>
</feature>
<feature type="modified residue" description="Phenylalanine amide" evidence="2 4">
    <location>
        <position position="82"/>
    </location>
</feature>
<feature type="modified residue" description="Sulfotyrosine" evidence="2 4">
    <location>
        <position position="114"/>
    </location>
</feature>
<feature type="modified residue" description="Phenylalanine amide" evidence="2 4">
    <location>
        <position position="119"/>
    </location>
</feature>
<feature type="modified residue" description="Sulfotyrosine" evidence="1">
    <location>
        <position position="131"/>
    </location>
</feature>
<feature type="modified residue" description="Phenylalanine amide" evidence="1">
    <location>
        <position position="136"/>
    </location>
</feature>
<comment type="function">
    <text evidence="1">Drosulfakinin-0 (DSK 0) plays diverse biological roles including regulating gut muscle contraction in adults but not in larvae.</text>
</comment>
<comment type="subcellular location">
    <subcellularLocation>
        <location evidence="1">Secreted</location>
    </subcellularLocation>
</comment>
<comment type="similarity">
    <text evidence="2">Belongs to the gastrin/cholecystokinin family.</text>
</comment>
<organism>
    <name type="scientific">Drosophila teissieri</name>
    <name type="common">Fruit fly</name>
    <dbReference type="NCBI Taxonomy" id="7243"/>
    <lineage>
        <taxon>Eukaryota</taxon>
        <taxon>Metazoa</taxon>
        <taxon>Ecdysozoa</taxon>
        <taxon>Arthropoda</taxon>
        <taxon>Hexapoda</taxon>
        <taxon>Insecta</taxon>
        <taxon>Pterygota</taxon>
        <taxon>Neoptera</taxon>
        <taxon>Endopterygota</taxon>
        <taxon>Diptera</taxon>
        <taxon>Brachycera</taxon>
        <taxon>Muscomorpha</taxon>
        <taxon>Ephydroidea</taxon>
        <taxon>Drosophilidae</taxon>
        <taxon>Drosophila</taxon>
        <taxon>Sophophora</taxon>
    </lineage>
</organism>
<protein>
    <recommendedName>
        <fullName evidence="4">Drosulfakinins</fullName>
    </recommendedName>
    <component>
        <recommendedName>
            <fullName evidence="4">Drosulfakinin-0</fullName>
            <shortName evidence="4">DSK-0</shortName>
        </recommendedName>
    </component>
    <component>
        <recommendedName>
            <fullName evidence="4">Drosulfakinin-1</fullName>
        </recommendedName>
        <alternativeName>
            <fullName evidence="4">Drosulfakinin I</fullName>
            <shortName evidence="4">DSK-I</shortName>
        </alternativeName>
    </component>
    <component>
        <recommendedName>
            <fullName evidence="4">Drosulfakinin-2</fullName>
        </recommendedName>
        <alternativeName>
            <fullName evidence="4">Drosulfakinin II</fullName>
            <shortName evidence="4">DSK-II</shortName>
        </alternativeName>
    </component>
</protein>
<dbReference type="EMBL" id="EU635465">
    <property type="protein sequence ID" value="ACC99374.1"/>
    <property type="molecule type" value="Genomic_DNA"/>
</dbReference>
<dbReference type="EnsemblMetazoa" id="XM_043799473.1">
    <property type="protein sequence ID" value="XP_043655408.1"/>
    <property type="gene ID" value="LOC122621566"/>
</dbReference>
<dbReference type="GO" id="GO:0005576">
    <property type="term" value="C:extracellular region"/>
    <property type="evidence" value="ECO:0007669"/>
    <property type="project" value="UniProtKB-SubCell"/>
</dbReference>
<dbReference type="GO" id="GO:0005179">
    <property type="term" value="F:hormone activity"/>
    <property type="evidence" value="ECO:0007669"/>
    <property type="project" value="UniProtKB-KW"/>
</dbReference>
<dbReference type="GO" id="GO:0007218">
    <property type="term" value="P:neuropeptide signaling pathway"/>
    <property type="evidence" value="ECO:0007669"/>
    <property type="project" value="UniProtKB-KW"/>
</dbReference>
<dbReference type="GO" id="GO:0006939">
    <property type="term" value="P:smooth muscle contraction"/>
    <property type="evidence" value="ECO:0000250"/>
    <property type="project" value="UniProtKB"/>
</dbReference>
<dbReference type="InterPro" id="IPR013152">
    <property type="entry name" value="Gastrin/cholecystokinin_CS"/>
</dbReference>
<dbReference type="InterPro" id="IPR013259">
    <property type="entry name" value="Sulfakinin"/>
</dbReference>
<dbReference type="Pfam" id="PF08257">
    <property type="entry name" value="Sulfakinin"/>
    <property type="match status" value="2"/>
</dbReference>
<dbReference type="PROSITE" id="PS00259">
    <property type="entry name" value="GASTRIN"/>
    <property type="match status" value="2"/>
</dbReference>
<keyword id="KW-0027">Amidation</keyword>
<keyword id="KW-0165">Cleavage on pair of basic residues</keyword>
<keyword id="KW-0372">Hormone</keyword>
<keyword id="KW-0527">Neuropeptide</keyword>
<keyword id="KW-0964">Secreted</keyword>
<keyword id="KW-0732">Signal</keyword>
<keyword id="KW-0765">Sulfation</keyword>
<accession>B2ZBA0</accession>
<sequence>MGLRSCTHFATLVMPLWALAFCFLVLVPVPAQTTSLQISKGDRRLQDLESNMGAESDQPNANLVGTSLSRFGDKRNQKIITFGRRVPRPIIPIELDLLMDNDDENTKAKRFDDYGHMRFGKRGGDDQFDDYGHMRFGR</sequence>
<name>DSK_DROTE</name>
<proteinExistence type="evidence at protein level"/>